<dbReference type="EC" id="2.5.1.151" evidence="5 8 9 13"/>
<dbReference type="EC" id="1.16.1.6" evidence="3 4 8 13"/>
<dbReference type="EMBL" id="AL080062">
    <property type="protein sequence ID" value="CAB45693.2"/>
    <property type="molecule type" value="mRNA"/>
</dbReference>
<dbReference type="EMBL" id="AL451136">
    <property type="status" value="NOT_ANNOTATED_CDS"/>
    <property type="molecule type" value="Genomic_DNA"/>
</dbReference>
<dbReference type="EMBL" id="BC006122">
    <property type="protein sequence ID" value="AAH06122.3"/>
    <property type="status" value="ALT_INIT"/>
    <property type="molecule type" value="mRNA"/>
</dbReference>
<dbReference type="CCDS" id="CCDS41324.1"/>
<dbReference type="PIR" id="T12462">
    <property type="entry name" value="T12462"/>
</dbReference>
<dbReference type="RefSeq" id="NP_001317469.1">
    <property type="nucleotide sequence ID" value="NM_001330540.1"/>
</dbReference>
<dbReference type="RefSeq" id="NP_056321.2">
    <property type="nucleotide sequence ID" value="NM_015506.3"/>
</dbReference>
<dbReference type="PDB" id="3SBY">
    <property type="method" value="X-ray"/>
    <property type="resolution" value="2.71 A"/>
    <property type="chains" value="A/B=1-244"/>
</dbReference>
<dbReference type="PDB" id="3SBZ">
    <property type="method" value="X-ray"/>
    <property type="resolution" value="2.00 A"/>
    <property type="chains" value="A=1-244"/>
</dbReference>
<dbReference type="PDB" id="3SC0">
    <property type="method" value="X-ray"/>
    <property type="resolution" value="1.95 A"/>
    <property type="chains" value="A=1-238"/>
</dbReference>
<dbReference type="PDB" id="3SOM">
    <property type="method" value="X-ray"/>
    <property type="resolution" value="2.40 A"/>
    <property type="chains" value="A/B/C/D/E/F/G/H/I/J/K/L/M/N/O/P=1-282"/>
</dbReference>
<dbReference type="PDB" id="5UOS">
    <property type="method" value="X-ray"/>
    <property type="resolution" value="2.51 A"/>
    <property type="chains" value="A=1-238"/>
</dbReference>
<dbReference type="PDB" id="7WUZ">
    <property type="method" value="X-ray"/>
    <property type="resolution" value="1.93 A"/>
    <property type="chains" value="A=1-239"/>
</dbReference>
<dbReference type="PDBsum" id="3SBY"/>
<dbReference type="PDBsum" id="3SBZ"/>
<dbReference type="PDBsum" id="3SC0"/>
<dbReference type="PDBsum" id="3SOM"/>
<dbReference type="PDBsum" id="5UOS"/>
<dbReference type="PDBsum" id="7WUZ"/>
<dbReference type="SMR" id="Q9Y4U1"/>
<dbReference type="BioGRID" id="117458">
    <property type="interactions" value="20"/>
</dbReference>
<dbReference type="FunCoup" id="Q9Y4U1">
    <property type="interactions" value="879"/>
</dbReference>
<dbReference type="IntAct" id="Q9Y4U1">
    <property type="interactions" value="12"/>
</dbReference>
<dbReference type="STRING" id="9606.ENSP00000383840"/>
<dbReference type="DrugBank" id="DB00115">
    <property type="generic name" value="Cyanocobalamin"/>
</dbReference>
<dbReference type="DrugBank" id="DB00200">
    <property type="generic name" value="Hydroxocobalamin"/>
</dbReference>
<dbReference type="iPTMnet" id="Q9Y4U1"/>
<dbReference type="PhosphoSitePlus" id="Q9Y4U1"/>
<dbReference type="BioMuta" id="MMACHC"/>
<dbReference type="DMDM" id="85681045"/>
<dbReference type="jPOST" id="Q9Y4U1"/>
<dbReference type="MassIVE" id="Q9Y4U1"/>
<dbReference type="PaxDb" id="9606-ENSP00000383840"/>
<dbReference type="PeptideAtlas" id="Q9Y4U1"/>
<dbReference type="ProteomicsDB" id="86249"/>
<dbReference type="Pumba" id="Q9Y4U1"/>
<dbReference type="TopDownProteomics" id="Q9Y4U1"/>
<dbReference type="ABCD" id="Q9Y4U1">
    <property type="antibodies" value="1 sequenced antibody"/>
</dbReference>
<dbReference type="Antibodypedia" id="32641">
    <property type="antibodies" value="411 antibodies from 32 providers"/>
</dbReference>
<dbReference type="DNASU" id="25974"/>
<dbReference type="Ensembl" id="ENST00000401061.9">
    <property type="protein sequence ID" value="ENSP00000383840.4"/>
    <property type="gene ID" value="ENSG00000132763.15"/>
</dbReference>
<dbReference type="GeneID" id="25974"/>
<dbReference type="KEGG" id="hsa:25974"/>
<dbReference type="MANE-Select" id="ENST00000401061.9">
    <property type="protein sequence ID" value="ENSP00000383840.4"/>
    <property type="RefSeq nucleotide sequence ID" value="NM_015506.3"/>
    <property type="RefSeq protein sequence ID" value="NP_056321.2"/>
</dbReference>
<dbReference type="UCSC" id="uc009vxv.4">
    <property type="organism name" value="human"/>
</dbReference>
<dbReference type="AGR" id="HGNC:24525"/>
<dbReference type="CTD" id="25974"/>
<dbReference type="DisGeNET" id="25974"/>
<dbReference type="GeneCards" id="MMACHC"/>
<dbReference type="GeneReviews" id="MMACHC"/>
<dbReference type="HGNC" id="HGNC:24525">
    <property type="gene designation" value="MMACHC"/>
</dbReference>
<dbReference type="HPA" id="ENSG00000132763">
    <property type="expression patterns" value="Tissue enhanced (liver)"/>
</dbReference>
<dbReference type="MalaCards" id="MMACHC"/>
<dbReference type="MIM" id="277400">
    <property type="type" value="phenotype"/>
</dbReference>
<dbReference type="MIM" id="609831">
    <property type="type" value="gene"/>
</dbReference>
<dbReference type="neXtProt" id="NX_Q9Y4U1"/>
<dbReference type="OpenTargets" id="ENSG00000132763"/>
<dbReference type="Orphanet" id="79282">
    <property type="disease" value="Methylmalonic acidemia with homocystinuria, type cblC"/>
</dbReference>
<dbReference type="PharmGKB" id="PA142671348"/>
<dbReference type="VEuPathDB" id="HostDB:ENSG00000132763"/>
<dbReference type="eggNOG" id="KOG4552">
    <property type="taxonomic scope" value="Eukaryota"/>
</dbReference>
<dbReference type="GeneTree" id="ENSGT00390000003464"/>
<dbReference type="HOGENOM" id="CLU_095722_0_0_1"/>
<dbReference type="InParanoid" id="Q9Y4U1"/>
<dbReference type="OMA" id="FQVGWYN"/>
<dbReference type="OrthoDB" id="409189at2759"/>
<dbReference type="PAN-GO" id="Q9Y4U1">
    <property type="GO annotations" value="5 GO annotations based on evolutionary models"/>
</dbReference>
<dbReference type="PhylomeDB" id="Q9Y4U1"/>
<dbReference type="TreeFam" id="TF332476"/>
<dbReference type="BioCyc" id="MetaCyc:ENSG00000132763-MONOMER"/>
<dbReference type="BRENDA" id="2.5.1.151">
    <property type="organism ID" value="2681"/>
</dbReference>
<dbReference type="PathwayCommons" id="Q9Y4U1"/>
<dbReference type="Reactome" id="R-HSA-3359473">
    <property type="pathway name" value="Defective MMADHC causes MMAHCD"/>
</dbReference>
<dbReference type="Reactome" id="R-HSA-3359474">
    <property type="pathway name" value="Defective MMACHC causes MAHCC"/>
</dbReference>
<dbReference type="Reactome" id="R-HSA-9759218">
    <property type="pathway name" value="Cobalamin (Cbl) metabolism"/>
</dbReference>
<dbReference type="SABIO-RK" id="Q9Y4U1"/>
<dbReference type="SignaLink" id="Q9Y4U1"/>
<dbReference type="BioGRID-ORCS" id="25974">
    <property type="hits" value="60 hits in 1163 CRISPR screens"/>
</dbReference>
<dbReference type="ChiTaRS" id="MMACHC">
    <property type="organism name" value="human"/>
</dbReference>
<dbReference type="EvolutionaryTrace" id="Q9Y4U1"/>
<dbReference type="GeneWiki" id="MMACHC"/>
<dbReference type="GenomeRNAi" id="25974"/>
<dbReference type="Pharos" id="Q9Y4U1">
    <property type="development level" value="Tbio"/>
</dbReference>
<dbReference type="PRO" id="PR:Q9Y4U1"/>
<dbReference type="Proteomes" id="UP000005640">
    <property type="component" value="Chromosome 1"/>
</dbReference>
<dbReference type="RNAct" id="Q9Y4U1">
    <property type="molecule type" value="protein"/>
</dbReference>
<dbReference type="Bgee" id="ENSG00000132763">
    <property type="expression patterns" value="Expressed in right lobe of liver and 108 other cell types or tissues"/>
</dbReference>
<dbReference type="ExpressionAtlas" id="Q9Y4U1">
    <property type="expression patterns" value="baseline and differential"/>
</dbReference>
<dbReference type="GO" id="GO:0005737">
    <property type="term" value="C:cytoplasm"/>
    <property type="evidence" value="ECO:0000314"/>
    <property type="project" value="UniProtKB"/>
</dbReference>
<dbReference type="GO" id="GO:0005829">
    <property type="term" value="C:cytosol"/>
    <property type="evidence" value="ECO:0000314"/>
    <property type="project" value="MGI"/>
</dbReference>
<dbReference type="GO" id="GO:0031419">
    <property type="term" value="F:cobalamin binding"/>
    <property type="evidence" value="ECO:0007669"/>
    <property type="project" value="UniProtKB-KW"/>
</dbReference>
<dbReference type="GO" id="GO:0033787">
    <property type="term" value="F:cyanocobalamin reductase (cyanide-eliminating) (NADP+) activity"/>
    <property type="evidence" value="ECO:0000314"/>
    <property type="project" value="UniProtKB"/>
</dbReference>
<dbReference type="GO" id="GO:0032451">
    <property type="term" value="F:demethylase activity"/>
    <property type="evidence" value="ECO:0000314"/>
    <property type="project" value="UniProtKB"/>
</dbReference>
<dbReference type="GO" id="GO:0071949">
    <property type="term" value="F:FAD binding"/>
    <property type="evidence" value="ECO:0000314"/>
    <property type="project" value="UniProtKB"/>
</dbReference>
<dbReference type="GO" id="GO:0043295">
    <property type="term" value="F:glutathione binding"/>
    <property type="evidence" value="ECO:0000314"/>
    <property type="project" value="UniProtKB"/>
</dbReference>
<dbReference type="GO" id="GO:0016491">
    <property type="term" value="F:oxidoreductase activity"/>
    <property type="evidence" value="ECO:0000314"/>
    <property type="project" value="UniProtKB"/>
</dbReference>
<dbReference type="GO" id="GO:0042803">
    <property type="term" value="F:protein homodimerization activity"/>
    <property type="evidence" value="ECO:0000353"/>
    <property type="project" value="UniProtKB"/>
</dbReference>
<dbReference type="GO" id="GO:0016765">
    <property type="term" value="F:transferase activity, transferring alkyl or aryl (other than methyl) groups"/>
    <property type="evidence" value="ECO:0000269"/>
    <property type="project" value="Reactome"/>
</dbReference>
<dbReference type="GO" id="GO:0009235">
    <property type="term" value="P:cobalamin metabolic process"/>
    <property type="evidence" value="ECO:0000314"/>
    <property type="project" value="UniProtKB"/>
</dbReference>
<dbReference type="GO" id="GO:0070988">
    <property type="term" value="P:demethylation"/>
    <property type="evidence" value="ECO:0000314"/>
    <property type="project" value="UniProtKB"/>
</dbReference>
<dbReference type="GO" id="GO:0006749">
    <property type="term" value="P:glutathione metabolic process"/>
    <property type="evidence" value="ECO:0000314"/>
    <property type="project" value="UniProtKB"/>
</dbReference>
<dbReference type="CDD" id="cd12959">
    <property type="entry name" value="MMACHC-like"/>
    <property type="match status" value="1"/>
</dbReference>
<dbReference type="InterPro" id="IPR032037">
    <property type="entry name" value="MMACHC"/>
</dbReference>
<dbReference type="PANTHER" id="PTHR31457:SF2">
    <property type="entry name" value="CYANOCOBALAMIN REDUCTASE _ ALKYLCOBALAMIN DEALKYLASE"/>
    <property type="match status" value="1"/>
</dbReference>
<dbReference type="PANTHER" id="PTHR31457">
    <property type="entry name" value="METHYLMALONIC ACIDURIA AND HOMOCYSTINURIA TYPE C PROTEIN"/>
    <property type="match status" value="1"/>
</dbReference>
<dbReference type="Pfam" id="PF16690">
    <property type="entry name" value="MMACHC"/>
    <property type="match status" value="1"/>
</dbReference>
<evidence type="ECO:0000256" key="1">
    <source>
        <dbReference type="SAM" id="MobiDB-lite"/>
    </source>
</evidence>
<evidence type="ECO:0000269" key="2">
    <source>
    </source>
</evidence>
<evidence type="ECO:0000269" key="3">
    <source>
    </source>
</evidence>
<evidence type="ECO:0000269" key="4">
    <source>
    </source>
</evidence>
<evidence type="ECO:0000269" key="5">
    <source>
    </source>
</evidence>
<evidence type="ECO:0000269" key="6">
    <source>
    </source>
</evidence>
<evidence type="ECO:0000269" key="7">
    <source>
    </source>
</evidence>
<evidence type="ECO:0000269" key="8">
    <source>
    </source>
</evidence>
<evidence type="ECO:0000269" key="9">
    <source>
    </source>
</evidence>
<evidence type="ECO:0000269" key="10">
    <source>
    </source>
</evidence>
<evidence type="ECO:0000269" key="11">
    <source>
    </source>
</evidence>
<evidence type="ECO:0000269" key="12">
    <source>
    </source>
</evidence>
<evidence type="ECO:0000269" key="13">
    <source>
    </source>
</evidence>
<evidence type="ECO:0000269" key="14">
    <source>
    </source>
</evidence>
<evidence type="ECO:0000269" key="15">
    <source>
    </source>
</evidence>
<evidence type="ECO:0000303" key="16">
    <source>
    </source>
</evidence>
<evidence type="ECO:0000303" key="17">
    <source>
    </source>
</evidence>
<evidence type="ECO:0000303" key="18">
    <source>
    </source>
</evidence>
<evidence type="ECO:0000303" key="19">
    <source>
    </source>
</evidence>
<evidence type="ECO:0000303" key="20">
    <source>
    </source>
</evidence>
<evidence type="ECO:0000305" key="21"/>
<evidence type="ECO:0000305" key="22">
    <source>
    </source>
</evidence>
<evidence type="ECO:0000305" key="23">
    <source>
    </source>
</evidence>
<evidence type="ECO:0000305" key="24">
    <source>
    </source>
</evidence>
<evidence type="ECO:0000312" key="25">
    <source>
        <dbReference type="HGNC" id="HGNC:24525"/>
    </source>
</evidence>
<evidence type="ECO:0007744" key="26">
    <source>
        <dbReference type="PDB" id="3SC0"/>
    </source>
</evidence>
<evidence type="ECO:0007744" key="27">
    <source>
        <dbReference type="PDB" id="3SOM"/>
    </source>
</evidence>
<evidence type="ECO:0007744" key="28">
    <source>
    </source>
</evidence>
<evidence type="ECO:0007744" key="29">
    <source>
    </source>
</evidence>
<evidence type="ECO:0007744" key="30">
    <source>
    </source>
</evidence>
<evidence type="ECO:0007744" key="31">
    <source>
    </source>
</evidence>
<evidence type="ECO:0007829" key="32">
    <source>
        <dbReference type="PDB" id="3SBY"/>
    </source>
</evidence>
<evidence type="ECO:0007829" key="33">
    <source>
        <dbReference type="PDB" id="3SC0"/>
    </source>
</evidence>
<evidence type="ECO:0007829" key="34">
    <source>
        <dbReference type="PDB" id="3SOM"/>
    </source>
</evidence>
<evidence type="ECO:0007829" key="35">
    <source>
        <dbReference type="PDB" id="7WUZ"/>
    </source>
</evidence>
<reference key="1">
    <citation type="journal article" date="2007" name="BMC Genomics">
        <title>The full-ORF clone resource of the German cDNA consortium.</title>
        <authorList>
            <person name="Bechtel S."/>
            <person name="Rosenfelder H."/>
            <person name="Duda A."/>
            <person name="Schmidt C.P."/>
            <person name="Ernst U."/>
            <person name="Wellenreuther R."/>
            <person name="Mehrle A."/>
            <person name="Schuster C."/>
            <person name="Bahr A."/>
            <person name="Bloecker H."/>
            <person name="Heubner D."/>
            <person name="Hoerlein A."/>
            <person name="Michel G."/>
            <person name="Wedler H."/>
            <person name="Koehrer K."/>
            <person name="Ottenwaelder B."/>
            <person name="Poustka A."/>
            <person name="Wiemann S."/>
            <person name="Schupp I."/>
        </authorList>
    </citation>
    <scope>NUCLEOTIDE SEQUENCE [LARGE SCALE MRNA]</scope>
    <source>
        <tissue>Brain</tissue>
    </source>
</reference>
<reference key="2">
    <citation type="journal article" date="2006" name="Nature">
        <title>The DNA sequence and biological annotation of human chromosome 1.</title>
        <authorList>
            <person name="Gregory S.G."/>
            <person name="Barlow K.F."/>
            <person name="McLay K.E."/>
            <person name="Kaul R."/>
            <person name="Swarbreck D."/>
            <person name="Dunham A."/>
            <person name="Scott C.E."/>
            <person name="Howe K.L."/>
            <person name="Woodfine K."/>
            <person name="Spencer C.C.A."/>
            <person name="Jones M.C."/>
            <person name="Gillson C."/>
            <person name="Searle S."/>
            <person name="Zhou Y."/>
            <person name="Kokocinski F."/>
            <person name="McDonald L."/>
            <person name="Evans R."/>
            <person name="Phillips K."/>
            <person name="Atkinson A."/>
            <person name="Cooper R."/>
            <person name="Jones C."/>
            <person name="Hall R.E."/>
            <person name="Andrews T.D."/>
            <person name="Lloyd C."/>
            <person name="Ainscough R."/>
            <person name="Almeida J.P."/>
            <person name="Ambrose K.D."/>
            <person name="Anderson F."/>
            <person name="Andrew R.W."/>
            <person name="Ashwell R.I.S."/>
            <person name="Aubin K."/>
            <person name="Babbage A.K."/>
            <person name="Bagguley C.L."/>
            <person name="Bailey J."/>
            <person name="Beasley H."/>
            <person name="Bethel G."/>
            <person name="Bird C.P."/>
            <person name="Bray-Allen S."/>
            <person name="Brown J.Y."/>
            <person name="Brown A.J."/>
            <person name="Buckley D."/>
            <person name="Burton J."/>
            <person name="Bye J."/>
            <person name="Carder C."/>
            <person name="Chapman J.C."/>
            <person name="Clark S.Y."/>
            <person name="Clarke G."/>
            <person name="Clee C."/>
            <person name="Cobley V."/>
            <person name="Collier R.E."/>
            <person name="Corby N."/>
            <person name="Coville G.J."/>
            <person name="Davies J."/>
            <person name="Deadman R."/>
            <person name="Dunn M."/>
            <person name="Earthrowl M."/>
            <person name="Ellington A.G."/>
            <person name="Errington H."/>
            <person name="Frankish A."/>
            <person name="Frankland J."/>
            <person name="French L."/>
            <person name="Garner P."/>
            <person name="Garnett J."/>
            <person name="Gay L."/>
            <person name="Ghori M.R.J."/>
            <person name="Gibson R."/>
            <person name="Gilby L.M."/>
            <person name="Gillett W."/>
            <person name="Glithero R.J."/>
            <person name="Grafham D.V."/>
            <person name="Griffiths C."/>
            <person name="Griffiths-Jones S."/>
            <person name="Grocock R."/>
            <person name="Hammond S."/>
            <person name="Harrison E.S.I."/>
            <person name="Hart E."/>
            <person name="Haugen E."/>
            <person name="Heath P.D."/>
            <person name="Holmes S."/>
            <person name="Holt K."/>
            <person name="Howden P.J."/>
            <person name="Hunt A.R."/>
            <person name="Hunt S.E."/>
            <person name="Hunter G."/>
            <person name="Isherwood J."/>
            <person name="James R."/>
            <person name="Johnson C."/>
            <person name="Johnson D."/>
            <person name="Joy A."/>
            <person name="Kay M."/>
            <person name="Kershaw J.K."/>
            <person name="Kibukawa M."/>
            <person name="Kimberley A.M."/>
            <person name="King A."/>
            <person name="Knights A.J."/>
            <person name="Lad H."/>
            <person name="Laird G."/>
            <person name="Lawlor S."/>
            <person name="Leongamornlert D.A."/>
            <person name="Lloyd D.M."/>
            <person name="Loveland J."/>
            <person name="Lovell J."/>
            <person name="Lush M.J."/>
            <person name="Lyne R."/>
            <person name="Martin S."/>
            <person name="Mashreghi-Mohammadi M."/>
            <person name="Matthews L."/>
            <person name="Matthews N.S.W."/>
            <person name="McLaren S."/>
            <person name="Milne S."/>
            <person name="Mistry S."/>
            <person name="Moore M.J.F."/>
            <person name="Nickerson T."/>
            <person name="O'Dell C.N."/>
            <person name="Oliver K."/>
            <person name="Palmeiri A."/>
            <person name="Palmer S.A."/>
            <person name="Parker A."/>
            <person name="Patel D."/>
            <person name="Pearce A.V."/>
            <person name="Peck A.I."/>
            <person name="Pelan S."/>
            <person name="Phelps K."/>
            <person name="Phillimore B.J."/>
            <person name="Plumb R."/>
            <person name="Rajan J."/>
            <person name="Raymond C."/>
            <person name="Rouse G."/>
            <person name="Saenphimmachak C."/>
            <person name="Sehra H.K."/>
            <person name="Sheridan E."/>
            <person name="Shownkeen R."/>
            <person name="Sims S."/>
            <person name="Skuce C.D."/>
            <person name="Smith M."/>
            <person name="Steward C."/>
            <person name="Subramanian S."/>
            <person name="Sycamore N."/>
            <person name="Tracey A."/>
            <person name="Tromans A."/>
            <person name="Van Helmond Z."/>
            <person name="Wall M."/>
            <person name="Wallis J.M."/>
            <person name="White S."/>
            <person name="Whitehead S.L."/>
            <person name="Wilkinson J.E."/>
            <person name="Willey D.L."/>
            <person name="Williams H."/>
            <person name="Wilming L."/>
            <person name="Wray P.W."/>
            <person name="Wu Z."/>
            <person name="Coulson A."/>
            <person name="Vaudin M."/>
            <person name="Sulston J.E."/>
            <person name="Durbin R.M."/>
            <person name="Hubbard T."/>
            <person name="Wooster R."/>
            <person name="Dunham I."/>
            <person name="Carter N.P."/>
            <person name="McVean G."/>
            <person name="Ross M.T."/>
            <person name="Harrow J."/>
            <person name="Olson M.V."/>
            <person name="Beck S."/>
            <person name="Rogers J."/>
            <person name="Bentley D.R."/>
        </authorList>
    </citation>
    <scope>NUCLEOTIDE SEQUENCE [LARGE SCALE GENOMIC DNA]</scope>
</reference>
<reference key="3">
    <citation type="journal article" date="2004" name="Genome Res.">
        <title>The status, quality, and expansion of the NIH full-length cDNA project: the Mammalian Gene Collection (MGC).</title>
        <authorList>
            <consortium name="The MGC Project Team"/>
        </authorList>
    </citation>
    <scope>NUCLEOTIDE SEQUENCE [LARGE SCALE MRNA] OF 4-282</scope>
    <source>
        <tissue>Lung</tissue>
    </source>
</reference>
<reference key="4">
    <citation type="journal article" date="2008" name="Proc. Natl. Acad. Sci. U.S.A.">
        <title>A quantitative atlas of mitotic phosphorylation.</title>
        <authorList>
            <person name="Dephoure N."/>
            <person name="Zhou C."/>
            <person name="Villen J."/>
            <person name="Beausoleil S.A."/>
            <person name="Bakalarski C.E."/>
            <person name="Elledge S.J."/>
            <person name="Gygi S.P."/>
        </authorList>
    </citation>
    <scope>PHOSPHORYLATION [LARGE SCALE ANALYSIS] AT SER-245</scope>
    <scope>IDENTIFICATION BY MASS SPECTROMETRY [LARGE SCALE ANALYSIS]</scope>
    <source>
        <tissue>Cervix carcinoma</tissue>
    </source>
</reference>
<reference key="5">
    <citation type="journal article" date="2008" name="Proc. Natl. Acad. Sci. U.S.A.">
        <title>Decyanation of vitamin B12 by a trafficking chaperone.</title>
        <authorList>
            <person name="Kim J."/>
            <person name="Gherasim C."/>
            <person name="Banerjee R."/>
        </authorList>
    </citation>
    <scope>FUNCTION</scope>
    <scope>CATALYTIC ACTIVITY</scope>
</reference>
<reference key="6">
    <citation type="journal article" date="2009" name="Anal. Chem.">
        <title>Lys-N and trypsin cover complementary parts of the phosphoproteome in a refined SCX-based approach.</title>
        <authorList>
            <person name="Gauci S."/>
            <person name="Helbig A.O."/>
            <person name="Slijper M."/>
            <person name="Krijgsveld J."/>
            <person name="Heck A.J."/>
            <person name="Mohammed S."/>
        </authorList>
    </citation>
    <scope>IDENTIFICATION BY MASS SPECTROMETRY [LARGE SCALE ANALYSIS]</scope>
</reference>
<reference key="7">
    <citation type="journal article" date="2009" name="J. Biol. Chem.">
        <title>A human vitamin B12 trafficking protein uses glutathione transferase activity for processing alkylcobalamins.</title>
        <authorList>
            <person name="Kim J."/>
            <person name="Hannibal L."/>
            <person name="Gherasim C."/>
            <person name="Jacobsen D.W."/>
            <person name="Banerjee R."/>
        </authorList>
    </citation>
    <scope>FUNCTION</scope>
    <scope>BIOPHYSICOCHEMICAL PROPERTIES</scope>
    <scope>CATALYTIC ACTIVITY</scope>
    <scope>SUBSTRATE SPECIFICITY</scope>
</reference>
<reference key="8">
    <citation type="journal article" date="2009" name="Mol. Genet. Metab.">
        <title>Mechanism of vitamin B12-responsiveness in cblC methylmalonic aciduria with homocystinuria.</title>
        <authorList>
            <person name="Froese D.S."/>
            <person name="Zhang J."/>
            <person name="Healy S."/>
            <person name="Gravel R.A."/>
        </authorList>
    </citation>
    <scope>FUNCTION</scope>
    <scope>CATALYTIC ACTIVITY</scope>
    <scope>COFACTOR</scope>
    <scope>CHARACTERIZATION OF VARIANTS MAHCC ASP-147 AND GLN-161</scope>
    <scope>MUTAGENESIS OF HIS-122</scope>
</reference>
<reference key="9">
    <citation type="journal article" date="2009" name="Sci. Signal.">
        <title>Quantitative phosphoproteomic analysis of T cell receptor signaling reveals system-wide modulation of protein-protein interactions.</title>
        <authorList>
            <person name="Mayya V."/>
            <person name="Lundgren D.H."/>
            <person name="Hwang S.-I."/>
            <person name="Rezaul K."/>
            <person name="Wu L."/>
            <person name="Eng J.K."/>
            <person name="Rodionov V."/>
            <person name="Han D.K."/>
        </authorList>
    </citation>
    <scope>PHOSPHORYLATION [LARGE SCALE ANALYSIS] AT SER-275</scope>
    <scope>IDENTIFICATION BY MASS SPECTROMETRY [LARGE SCALE ANALYSIS]</scope>
    <source>
        <tissue>Leukemic T-cell</tissue>
    </source>
</reference>
<reference key="10">
    <citation type="journal article" date="2010" name="Sci. Signal.">
        <title>Quantitative phosphoproteomics reveals widespread full phosphorylation site occupancy during mitosis.</title>
        <authorList>
            <person name="Olsen J.V."/>
            <person name="Vermeulen M."/>
            <person name="Santamaria A."/>
            <person name="Kumar C."/>
            <person name="Miller M.L."/>
            <person name="Jensen L.J."/>
            <person name="Gnad F."/>
            <person name="Cox J."/>
            <person name="Jensen T.S."/>
            <person name="Nigg E.A."/>
            <person name="Brunak S."/>
            <person name="Mann M."/>
        </authorList>
    </citation>
    <scope>PHOSPHORYLATION [LARGE SCALE ANALYSIS] AT SER-247; SER-275 AND SER-279</scope>
    <scope>IDENTIFICATION BY MASS SPECTROMETRY [LARGE SCALE ANALYSIS]</scope>
    <source>
        <tissue>Cervix carcinoma</tissue>
    </source>
</reference>
<reference key="11">
    <citation type="journal article" date="2011" name="BMC Syst. Biol.">
        <title>Initial characterization of the human central proteome.</title>
        <authorList>
            <person name="Burkard T.R."/>
            <person name="Planyavsky M."/>
            <person name="Kaupe I."/>
            <person name="Breitwieser F.P."/>
            <person name="Buerckstuemmer T."/>
            <person name="Bennett K.L."/>
            <person name="Superti-Furga G."/>
            <person name="Colinge J."/>
        </authorList>
    </citation>
    <scope>IDENTIFICATION BY MASS SPECTROMETRY [LARGE SCALE ANALYSIS]</scope>
</reference>
<reference key="12">
    <citation type="journal article" date="2011" name="Mol. Genet. Metab.">
        <title>Interaction between MMACHC and MMADHC, two human proteins participating in intracellular vitamin B(1)(2) metabolism.</title>
        <authorList>
            <person name="Plesa M."/>
            <person name="Kim J."/>
            <person name="Paquette S.G."/>
            <person name="Gagnon H."/>
            <person name="Ng-Thow-Hing C."/>
            <person name="Gibbs B.F."/>
            <person name="Hancock M.A."/>
            <person name="Rosenblatt D.S."/>
            <person name="Coulton J.W."/>
        </authorList>
    </citation>
    <scope>FUNCTION</scope>
    <scope>INTERACTION WITH MMADHC</scope>
</reference>
<reference key="13">
    <citation type="journal article" date="2013" name="Biochimie">
        <title>The C-terminal domain of CblD interacts with CblC and influences intracellular cobalamin partitioning.</title>
        <authorList>
            <person name="Gherasim C."/>
            <person name="Hannibal L."/>
            <person name="Rajagopalan D."/>
            <person name="Jacobsen D.W."/>
            <person name="Banerjee R."/>
        </authorList>
    </citation>
    <scope>INTERACTION WITH MMADHC</scope>
</reference>
<reference key="14">
    <citation type="journal article" date="2013" name="J. Proteome Res.">
        <title>Toward a comprehensive characterization of a human cancer cell phosphoproteome.</title>
        <authorList>
            <person name="Zhou H."/>
            <person name="Di Palma S."/>
            <person name="Preisinger C."/>
            <person name="Peng M."/>
            <person name="Polat A.N."/>
            <person name="Heck A.J."/>
            <person name="Mohammed S."/>
        </authorList>
    </citation>
    <scope>PHOSPHORYLATION [LARGE SCALE ANALYSIS] AT SER-275</scope>
    <scope>IDENTIFICATION BY MASS SPECTROMETRY [LARGE SCALE ANALYSIS]</scope>
    <source>
        <tissue>Erythroleukemia</tissue>
    </source>
</reference>
<reference key="15">
    <citation type="journal article" date="2013" name="Mol. Genet. Metab.">
        <title>Subcellular location of MMACHC and MMADHC, two human proteins central to intracellular vitamin B(12) metabolism.</title>
        <authorList>
            <person name="Mah W."/>
            <person name="Deme J.C."/>
            <person name="Watkins D."/>
            <person name="Fung S."/>
            <person name="Janer A."/>
            <person name="Shoubridge E.A."/>
            <person name="Rosenblatt D.S."/>
            <person name="Coulton J.W."/>
        </authorList>
    </citation>
    <scope>SUBCELLULAR LOCATION</scope>
</reference>
<reference key="16">
    <citation type="journal article" date="2014" name="J. Proteomics">
        <title>An enzyme assisted RP-RPLC approach for in-depth analysis of human liver phosphoproteome.</title>
        <authorList>
            <person name="Bian Y."/>
            <person name="Song C."/>
            <person name="Cheng K."/>
            <person name="Dong M."/>
            <person name="Wang F."/>
            <person name="Huang J."/>
            <person name="Sun D."/>
            <person name="Wang L."/>
            <person name="Ye M."/>
            <person name="Zou H."/>
        </authorList>
    </citation>
    <scope>IDENTIFICATION BY MASS SPECTROMETRY [LARGE SCALE ANALYSIS]</scope>
    <source>
        <tissue>Liver</tissue>
    </source>
</reference>
<reference key="17">
    <citation type="journal article" date="2014" name="Mol. Membr. Biol.">
        <title>Purification and interaction analyses of two human lysosomal vitamin B12 transporters: LMBD1 and ABCD4.</title>
        <authorList>
            <person name="Deme J.C."/>
            <person name="Hancock M.A."/>
            <person name="Xia X."/>
            <person name="Shintre C.A."/>
            <person name="Plesa M."/>
            <person name="Kim J.C."/>
            <person name="Carpenter E.P."/>
            <person name="Rosenblatt D.S."/>
            <person name="Coulton J.W."/>
        </authorList>
    </citation>
    <scope>FUNCTION</scope>
    <scope>INTERACTION WITH LMBRD1 AND ABCD4</scope>
</reference>
<reference key="18">
    <citation type="journal article" date="2015" name="J. Biol. Chem.">
        <title>Structural insights into the MMACHC-MMADHC protein complex involved in vitamin B12 trafficking.</title>
        <authorList>
            <person name="Froese D.S."/>
            <person name="Kopec J."/>
            <person name="Fitzpatrick F."/>
            <person name="Schuller M."/>
            <person name="McCorvie T.J."/>
            <person name="Chalk R."/>
            <person name="Plessl T."/>
            <person name="Fettelschoss V."/>
            <person name="Fowler B."/>
            <person name="Baumgartner M.R."/>
            <person name="Yue W.W."/>
        </authorList>
    </citation>
    <scope>INTERACTION WITH MMADHC</scope>
</reference>
<reference key="19">
    <citation type="journal article" date="2017" name="Biochim. Biophys. Acta">
        <title>Methionine synthase and methionine synthase reductase interact with MMACHC and with MMADHC.</title>
        <authorList>
            <person name="Bassila C."/>
            <person name="Ghemrawi R."/>
            <person name="Flayac J."/>
            <person name="Froese D.S."/>
            <person name="Baumgartner M.R."/>
            <person name="Gueant J.L."/>
            <person name="Coelho D."/>
        </authorList>
    </citation>
    <scope>FUNCTION</scope>
    <scope>INTERACTION WITH MMADHC; MTR AND MTRR</scope>
</reference>
<reference key="20">
    <citation type="journal article" date="2011" name="J. Biol. Chem.">
        <title>Structural basis of multifunctionality in a vitamin B12-processing enzyme.</title>
        <authorList>
            <person name="Koutmos M."/>
            <person name="Gherasim C."/>
            <person name="Smith J.L."/>
            <person name="Banerjee R."/>
        </authorList>
    </citation>
    <scope>X-RAY CRYSTALLOGRAPHY (1.95 ANGSTROMS) OF 1-238 IN COMPLEX WITH METHYLCOBALAMIN</scope>
    <scope>FUNCTION</scope>
    <scope>CATALYTIC ACTIVITY</scope>
    <scope>COFACTOR</scope>
    <scope>SUBUNIT</scope>
</reference>
<reference key="21">
    <citation type="journal article" date="2012" name="Biochemistry">
        <title>Structure of MMACHC reveals an arginine-rich pocket and a domain-swapped dimer for its B12 processing function.</title>
        <authorList>
            <person name="Froese D.S."/>
            <person name="Krojer T."/>
            <person name="Wu X."/>
            <person name="Shrestha R."/>
            <person name="Kiyani W."/>
            <person name="von Delft F."/>
            <person name="Gravel R.A."/>
            <person name="Oppermann U."/>
            <person name="Yue W.W."/>
        </authorList>
    </citation>
    <scope>X-RAY CRYSTALLOGRAPHY (2.40 ANGSTROMS) IN COMPLEX WITH ADENOSYLCOBALAMIN</scope>
    <scope>FUNCTION</scope>
    <scope>CATALYTIC ACTIVITY</scope>
    <scope>SUBUNIT</scope>
    <scope>CHARACTERIZATION OF VARIANT MAHCC GLN-161</scope>
    <scope>MUTAGENESIS OF ARG-206 AND ARG-230</scope>
</reference>
<reference key="22">
    <citation type="journal article" date="2006" name="Nat. Genet.">
        <title>Identification of the gene responsible for methylmalonic aciduria and homocystinuria, cblC type.</title>
        <authorList>
            <person name="Lerner-Ellis J.P."/>
            <person name="Tirone J.C."/>
            <person name="Pawelek P.D."/>
            <person name="Dore C."/>
            <person name="Atkinson J.L."/>
            <person name="Watkins D."/>
            <person name="Morel C.F."/>
            <person name="Fujiwara T.M."/>
            <person name="Moras E."/>
            <person name="Hosack A.R."/>
            <person name="Dunbar G.V."/>
            <person name="Antonicka H."/>
            <person name="Forgetta V."/>
            <person name="Dobson C.M."/>
            <person name="Leclerc D."/>
            <person name="Gravel R.A."/>
            <person name="Shoubridge E.A."/>
            <person name="Coulton J.W."/>
            <person name="Lepage P."/>
            <person name="Rommens J.M."/>
            <person name="Morgan K."/>
            <person name="Rosenblatt D.S."/>
        </authorList>
    </citation>
    <scope>VARIANTS MAHCC ARG-27; PRO-116; ARG-122; HIS-130; ASP-147; ALA-147; ASP-156; CYS-157; GLY-161; GLN-161; SER-189; PRO-193; TRP-206 AND PRO-206</scope>
    <scope>TISSUE SPECIFICITY</scope>
</reference>
<reference key="23">
    <citation type="journal article" date="2010" name="Mol. Genet. Metab.">
        <title>Thermolability of mutant MMACHC protein in the vitamin B12-responsive cblC disorder.</title>
        <authorList>
            <person name="Froese D.S."/>
            <person name="Healy S."/>
            <person name="McDonald M."/>
            <person name="Kochan G."/>
            <person name="Oppermann U."/>
            <person name="Niesen F.H."/>
            <person name="Gravel R.A."/>
        </authorList>
    </citation>
    <scope>CHARACTERIZATION OF VARIANT MAHCC GLN-161</scope>
</reference>
<reference key="24">
    <citation type="journal article" date="2015" name="J. Biol. Chem.">
        <title>Pathogenic mutations differentially affect the catalytic activities of the human B12-processing chaperone CblC and increase futile redox cycling.</title>
        <authorList>
            <person name="Gherasim C."/>
            <person name="Ruetz M."/>
            <person name="Li Z."/>
            <person name="Hudolin S."/>
            <person name="Banerjee R."/>
        </authorList>
    </citation>
    <scope>CHARACTERIZATION OF VARIANTS MAHCC GLY-161 AND GLN-161</scope>
    <scope>FUNCTION</scope>
    <scope>CATALYTIC ACTIVITY</scope>
</reference>
<accession>Q9Y4U1</accession>
<accession>Q5T157</accession>
<accession>Q9BRQ7</accession>
<organism>
    <name type="scientific">Homo sapiens</name>
    <name type="common">Human</name>
    <dbReference type="NCBI Taxonomy" id="9606"/>
    <lineage>
        <taxon>Eukaryota</taxon>
        <taxon>Metazoa</taxon>
        <taxon>Chordata</taxon>
        <taxon>Craniata</taxon>
        <taxon>Vertebrata</taxon>
        <taxon>Euteleostomi</taxon>
        <taxon>Mammalia</taxon>
        <taxon>Eutheria</taxon>
        <taxon>Euarchontoglires</taxon>
        <taxon>Primates</taxon>
        <taxon>Haplorrhini</taxon>
        <taxon>Catarrhini</taxon>
        <taxon>Hominidae</taxon>
        <taxon>Homo</taxon>
    </lineage>
</organism>
<keyword id="KW-0002">3D-structure</keyword>
<keyword id="KW-0846">Cobalamin</keyword>
<keyword id="KW-0170">Cobalt</keyword>
<keyword id="KW-0963">Cytoplasm</keyword>
<keyword id="KW-0225">Disease variant</keyword>
<keyword id="KW-0274">FAD</keyword>
<keyword id="KW-0285">Flavoprotein</keyword>
<keyword id="KW-0288">FMN</keyword>
<keyword id="KW-0521">NADP</keyword>
<keyword id="KW-0560">Oxidoreductase</keyword>
<keyword id="KW-0597">Phosphoprotein</keyword>
<keyword id="KW-1267">Proteomics identification</keyword>
<keyword id="KW-1185">Reference proteome</keyword>
<keyword id="KW-0808">Transferase</keyword>
<protein>
    <recommendedName>
        <fullName>Cyanocobalamin reductase / alkylcobalamin dealkylase</fullName>
    </recommendedName>
    <alternativeName>
        <fullName>Alkylcobalamin:glutathione S-alkyltransferase</fullName>
        <ecNumber evidence="5 8 9 13">2.5.1.151</ecNumber>
    </alternativeName>
    <alternativeName>
        <fullName evidence="18 20">CblC</fullName>
    </alternativeName>
    <alternativeName>
        <fullName>Cyanocobalamin reductase (cyanide-eliminating)</fullName>
        <ecNumber evidence="3 4 8 13">1.16.1.6</ecNumber>
    </alternativeName>
    <alternativeName>
        <fullName evidence="16">Methylmalonic aciduria and homocystinuria type C protein</fullName>
        <shortName>MMACHC</shortName>
    </alternativeName>
</protein>
<name>MMAC_HUMAN</name>
<proteinExistence type="evidence at protein level"/>
<feature type="chain" id="PRO_0000076258" description="Cyanocobalamin reductase / alkylcobalamin dealkylase">
    <location>
        <begin position="1"/>
        <end position="282"/>
    </location>
</feature>
<feature type="region of interest" description="Disordered" evidence="1">
    <location>
        <begin position="234"/>
        <end position="282"/>
    </location>
</feature>
<feature type="binding site" evidence="8 9 26 27">
    <location>
        <position position="104"/>
    </location>
    <ligand>
        <name>substrate</name>
    </ligand>
</feature>
<feature type="binding site" evidence="8 9 26 27">
    <location>
        <begin position="115"/>
        <end position="118"/>
    </location>
    <ligand>
        <name>substrate</name>
    </ligand>
</feature>
<feature type="binding site" evidence="8 9 26 27">
    <location>
        <begin position="129"/>
        <end position="131"/>
    </location>
    <ligand>
        <name>substrate</name>
    </ligand>
</feature>
<feature type="binding site" evidence="8 9 26 27">
    <location>
        <position position="149"/>
    </location>
    <ligand>
        <name>substrate</name>
    </ligand>
</feature>
<feature type="binding site" evidence="8 9 26 27">
    <location>
        <position position="160"/>
    </location>
    <ligand>
        <name>substrate</name>
    </ligand>
</feature>
<feature type="modified residue" description="Phosphoserine" evidence="28">
    <location>
        <position position="245"/>
    </location>
</feature>
<feature type="modified residue" description="Phosphoserine" evidence="30">
    <location>
        <position position="247"/>
    </location>
</feature>
<feature type="modified residue" description="Phosphoserine" evidence="29 30 31">
    <location>
        <position position="275"/>
    </location>
</feature>
<feature type="modified residue" description="Phosphoserine" evidence="30">
    <location>
        <position position="279"/>
    </location>
</feature>
<feature type="sequence variant" id="VAR_024770" description="In MAHCC; dbSNP:rs546099787." evidence="2">
    <original>Q</original>
    <variation>R</variation>
    <location>
        <position position="27"/>
    </location>
</feature>
<feature type="sequence variant" id="VAR_024771" description="In MAHCC; dbSNP:rs121918240." evidence="2">
    <original>L</original>
    <variation>P</variation>
    <location>
        <position position="116"/>
    </location>
</feature>
<feature type="sequence variant" id="VAR_024772" description="In MAHCC." evidence="2">
    <original>H</original>
    <variation>R</variation>
    <location>
        <position position="122"/>
    </location>
</feature>
<feature type="sequence variant" id="VAR_024773" description="In MAHCC; dbSNP:rs372670428." evidence="2">
    <original>Y</original>
    <variation>H</variation>
    <location>
        <position position="130"/>
    </location>
</feature>
<feature type="sequence variant" id="VAR_024774" description="In MAHCC; dbSNP:rs140522266." evidence="2">
    <original>G</original>
    <variation>A</variation>
    <location>
        <position position="147"/>
    </location>
</feature>
<feature type="sequence variant" id="VAR_024775" description="In MAHCC; loss of cyanocobalamin binding; dbSNP:rs140522266." evidence="2 4">
    <original>G</original>
    <variation>D</variation>
    <location>
        <position position="147"/>
    </location>
</feature>
<feature type="sequence variant" id="VAR_024776" description="In MAHCC; dbSNP:rs1553162910." evidence="2">
    <original>G</original>
    <variation>D</variation>
    <location>
        <position position="156"/>
    </location>
</feature>
<feature type="sequence variant" id="VAR_024777" description="In MAHCC; dbSNP:rs1002571805." evidence="2">
    <original>W</original>
    <variation>C</variation>
    <location>
        <position position="157"/>
    </location>
</feature>
<feature type="sequence variant" id="VAR_024778" description="In MAHCC; results in decreased stability and decreased methylcobalamin dealkylation activity; dbSNP:rs370596113." evidence="2 13">
    <original>R</original>
    <variation>G</variation>
    <location>
        <position position="161"/>
    </location>
</feature>
<feature type="sequence variant" id="VAR_024779" description="In MAHCC; results in decreased stability and reduced stabilization induced by cobalamin binding; has reduced affinity for cyanocobalamin and reduced activity in dealkylation of methylcobalamin; dbSNP:rs121918243." evidence="2 4 6 9 13">
    <original>R</original>
    <variation>Q</variation>
    <location>
        <position position="161"/>
    </location>
</feature>
<feature type="sequence variant" id="VAR_024780" description="In MAHCC; dbSNP:rs200895671." evidence="2">
    <original>R</original>
    <variation>S</variation>
    <location>
        <position position="189"/>
    </location>
</feature>
<feature type="sequence variant" id="VAR_024781" description="In MAHCC; dbSNP:rs1233135084." evidence="2">
    <original>L</original>
    <variation>P</variation>
    <location>
        <position position="193"/>
    </location>
</feature>
<feature type="sequence variant" id="VAR_024782" description="In MAHCC; dbSNP:rs371753672." evidence="2">
    <original>R</original>
    <variation>P</variation>
    <location>
        <position position="206"/>
    </location>
</feature>
<feature type="sequence variant" id="VAR_024783" description="In MAHCC; dbSNP:rs538023671." evidence="2">
    <original>R</original>
    <variation>W</variation>
    <location>
        <position position="206"/>
    </location>
</feature>
<feature type="sequence variant" id="VAR_038805" description="In dbSNP:rs35219601.">
    <original>S</original>
    <variation>G</variation>
    <location>
        <position position="271"/>
    </location>
</feature>
<feature type="mutagenesis site" description="Reduced affinity for cyanocobalamin." evidence="4">
    <original>H</original>
    <variation>A</variation>
    <location>
        <position position="122"/>
    </location>
</feature>
<feature type="mutagenesis site" description="Impairs protein folding." evidence="9">
    <original>R</original>
    <variation>Q</variation>
    <location>
        <position position="206"/>
    </location>
</feature>
<feature type="mutagenesis site" description="Reduced activity in dealkylation of methylcobalamin." evidence="9">
    <original>R</original>
    <variation>Q</variation>
    <location>
        <position position="230"/>
    </location>
</feature>
<feature type="sequence conflict" description="In Ref. 1; CAB45693." evidence="21" ref="1">
    <original>E</original>
    <variation>G</variation>
    <location>
        <position position="100"/>
    </location>
</feature>
<feature type="helix" evidence="35">
    <location>
        <begin position="1"/>
        <end position="16"/>
    </location>
</feature>
<feature type="helix" evidence="35">
    <location>
        <begin position="17"/>
        <end position="19"/>
    </location>
</feature>
<feature type="strand" evidence="35">
    <location>
        <begin position="21"/>
        <end position="27"/>
    </location>
</feature>
<feature type="helix" evidence="35">
    <location>
        <begin position="28"/>
        <end position="32"/>
    </location>
</feature>
<feature type="helix" evidence="35">
    <location>
        <begin position="37"/>
        <end position="39"/>
    </location>
</feature>
<feature type="strand" evidence="35">
    <location>
        <begin position="47"/>
        <end position="54"/>
    </location>
</feature>
<feature type="helix" evidence="35">
    <location>
        <begin position="58"/>
        <end position="61"/>
    </location>
</feature>
<feature type="helix" evidence="35">
    <location>
        <begin position="63"/>
        <end position="69"/>
    </location>
</feature>
<feature type="strand" evidence="33">
    <location>
        <begin position="74"/>
        <end position="76"/>
    </location>
</feature>
<feature type="helix" evidence="35">
    <location>
        <begin position="78"/>
        <end position="93"/>
    </location>
</feature>
<feature type="strand" evidence="35">
    <location>
        <begin position="100"/>
        <end position="103"/>
    </location>
</feature>
<feature type="helix" evidence="32">
    <location>
        <begin position="104"/>
        <end position="106"/>
    </location>
</feature>
<feature type="strand" evidence="35">
    <location>
        <begin position="113"/>
        <end position="115"/>
    </location>
</feature>
<feature type="helix" evidence="35">
    <location>
        <begin position="117"/>
        <end position="123"/>
    </location>
</feature>
<feature type="strand" evidence="35">
    <location>
        <begin position="126"/>
        <end position="130"/>
    </location>
</feature>
<feature type="helix" evidence="35">
    <location>
        <begin position="132"/>
        <end position="134"/>
    </location>
</feature>
<feature type="strand" evidence="34">
    <location>
        <begin position="135"/>
        <end position="137"/>
    </location>
</feature>
<feature type="turn" evidence="32">
    <location>
        <begin position="139"/>
        <end position="142"/>
    </location>
</feature>
<feature type="strand" evidence="35">
    <location>
        <begin position="148"/>
        <end position="151"/>
    </location>
</feature>
<feature type="turn" evidence="35">
    <location>
        <begin position="152"/>
        <end position="154"/>
    </location>
</feature>
<feature type="strand" evidence="35">
    <location>
        <begin position="159"/>
        <end position="170"/>
    </location>
</feature>
<feature type="helix" evidence="35">
    <location>
        <begin position="186"/>
        <end position="198"/>
    </location>
</feature>
<feature type="helix" evidence="35">
    <location>
        <begin position="200"/>
        <end position="202"/>
    </location>
</feature>
<feature type="helix" evidence="35">
    <location>
        <begin position="204"/>
        <end position="207"/>
    </location>
</feature>
<feature type="helix" evidence="35">
    <location>
        <begin position="217"/>
        <end position="224"/>
    </location>
</feature>
<feature type="helix" evidence="35">
    <location>
        <begin position="227"/>
        <end position="237"/>
    </location>
</feature>
<gene>
    <name evidence="25" type="primary">MMACHC</name>
</gene>
<sequence length="282" mass="31728">MEPKVAELKQKIEDTLCPFGFEVYPFQVAWYNELLPPAFHLPLPGPTLAFLVLSTPAMFDRALKPFLQSCHLRMLTDPVDQCVAYHLGRVRESLPELQIEIIADYEVHPNRRPKILAQTAAHVAGAAYYYQRQDVEADPWGNQRISGVCIHPRFGGWFAIRGVVLLPGIEVPDLPPRKPHDCVPTRADRIALLEGFNFHWRDWTYRDAVTPQERYSEEQKAYFSTPPAQRLALLGLAQPSEKPSSPSPDLPFTTPAPKKPGNPSRARSWLSPRVSPPASPGP</sequence>
<comment type="function">
    <text evidence="3 4 5 7 8 9 13 15 17 19">Cobalamin (vitamin B12) cytosolic chaperone that catalyzes the reductive decyanation of cyanocob(III)alamin (cyanocobalamin, CNCbl) to yield cob(II)alamin and cyanide, using FAD or FMN as cofactors and NADPH as cosubstrate (PubMed:18779575, PubMed:19700356, PubMed:21697092, PubMed:25809485). Cyanocobalamin constitutes the inactive form of vitamin B12 introduced from the diet, and is converted into the active cofactors methylcobalamin (MeCbl) involved in methionine biosynthesis, and 5'-deoxyadenosylcobalamin (AdoCbl) involved in the TCA cycle (PubMed:19801555). Forms a complex with the lysosomal transporter ABCD4 and its chaperone LMBRD1, to transport cobalamin across the lysosomal membrane into the cytosol (PubMed:25535791). The processing of cobalamin in the cytosol occurs in a multiprotein complex composed of at least MMACHC, MMADHC, MTRR (methionine synthase reductase) and MTR (methionine synthase) which may contribute to shuttle safely and efficiently cobalamin towards MTR in order to produce methionine (PubMed:21071249, PubMed:27771510). Also acts as a glutathione transferase by catalyzing the dealkylation of the alkylcob(III)alamins MeCbl and AdoCbl, using the thiolate of glutathione for nucleophilic displacement to generate cob(I)alamin and the corresponding glutathione thioether (PubMed:19801555, PubMed:21697092, PubMed:22642810, PubMed:25809485). The conversion of incoming MeCbl or AdoCbl into a common intermediate cob(I)alamin is necessary to meet the cellular needs for both cofactors (PubMed:19801555). Cysteine and homocysteine cannot substitute for glutathione in this reaction (PubMed:19801555).</text>
</comment>
<comment type="catalytic activity">
    <reaction evidence="3 4 8 13">
        <text>2 cob(II)alamin-[cyanocobalamin reductase] + 2 hydrogen cyanide + NADP(+) = 2 cyanocob(III)alamin + 2 apo-[cyanocobalamin reductase] + NADPH + H(+)</text>
        <dbReference type="Rhea" id="RHEA:16113"/>
        <dbReference type="Rhea" id="RHEA-COMP:14717"/>
        <dbReference type="Rhea" id="RHEA-COMP:14718"/>
        <dbReference type="ChEBI" id="CHEBI:15378"/>
        <dbReference type="ChEBI" id="CHEBI:16304"/>
        <dbReference type="ChEBI" id="CHEBI:17439"/>
        <dbReference type="ChEBI" id="CHEBI:18407"/>
        <dbReference type="ChEBI" id="CHEBI:57783"/>
        <dbReference type="ChEBI" id="CHEBI:58349"/>
        <dbReference type="ChEBI" id="CHEBI:83228"/>
        <dbReference type="EC" id="1.16.1.6"/>
    </reaction>
    <physiologicalReaction direction="right-to-left" evidence="22">
        <dbReference type="Rhea" id="RHEA:16115"/>
    </physiologicalReaction>
</comment>
<comment type="catalytic activity">
    <reaction evidence="5 8 9 13">
        <text>apo-[alkylcobalamin reductase] + an R-cob(III)alamin + glutathione = cob(I)alamin-[alkylcobalamin reductase] + an S-substituted glutathione + H(+)</text>
        <dbReference type="Rhea" id="RHEA:40719"/>
        <dbReference type="Rhea" id="RHEA-COMP:14730"/>
        <dbReference type="Rhea" id="RHEA-COMP:14731"/>
        <dbReference type="ChEBI" id="CHEBI:15378"/>
        <dbReference type="ChEBI" id="CHEBI:57925"/>
        <dbReference type="ChEBI" id="CHEBI:60488"/>
        <dbReference type="ChEBI" id="CHEBI:83228"/>
        <dbReference type="ChEBI" id="CHEBI:90779"/>
        <dbReference type="ChEBI" id="CHEBI:140785"/>
        <dbReference type="EC" id="2.5.1.151"/>
    </reaction>
    <physiologicalReaction direction="left-to-right" evidence="24">
        <dbReference type="Rhea" id="RHEA:40720"/>
    </physiologicalReaction>
</comment>
<comment type="catalytic activity">
    <reaction evidence="5 9 13">
        <text>apo-[alkylcobalamin reductase] + methylcob(III)alamin + glutathione = S-methyl glutathione + cob(I)alamin-[alkylcobalamin reductase] + H(+)</text>
        <dbReference type="Rhea" id="RHEA:63132"/>
        <dbReference type="Rhea" id="RHEA-COMP:14730"/>
        <dbReference type="Rhea" id="RHEA-COMP:14731"/>
        <dbReference type="ChEBI" id="CHEBI:15378"/>
        <dbReference type="ChEBI" id="CHEBI:28115"/>
        <dbReference type="ChEBI" id="CHEBI:57925"/>
        <dbReference type="ChEBI" id="CHEBI:60488"/>
        <dbReference type="ChEBI" id="CHEBI:83228"/>
        <dbReference type="ChEBI" id="CHEBI:141467"/>
        <dbReference type="EC" id="2.5.1.151"/>
    </reaction>
    <physiologicalReaction direction="left-to-right" evidence="24">
        <dbReference type="Rhea" id="RHEA:63133"/>
    </physiologicalReaction>
</comment>
<comment type="catalytic activity">
    <reaction evidence="5">
        <text>apo-[alkylcobalamin reductase] + adenosylcob(III)alamin + glutathione = S-adenosylglutathione + cob(I)alamin-[alkylcobalamin reductase] + H(+)</text>
        <dbReference type="Rhea" id="RHEA:63136"/>
        <dbReference type="Rhea" id="RHEA-COMP:14730"/>
        <dbReference type="Rhea" id="RHEA-COMP:14731"/>
        <dbReference type="ChEBI" id="CHEBI:15378"/>
        <dbReference type="ChEBI" id="CHEBI:18408"/>
        <dbReference type="ChEBI" id="CHEBI:57925"/>
        <dbReference type="ChEBI" id="CHEBI:60488"/>
        <dbReference type="ChEBI" id="CHEBI:83228"/>
        <dbReference type="ChEBI" id="CHEBI:146184"/>
        <dbReference type="EC" id="2.5.1.151"/>
    </reaction>
    <physiologicalReaction direction="left-to-right" evidence="23">
        <dbReference type="Rhea" id="RHEA:63137"/>
    </physiologicalReaction>
</comment>
<comment type="cofactor">
    <cofactor evidence="4 8">
        <name>FAD</name>
        <dbReference type="ChEBI" id="CHEBI:57692"/>
    </cofactor>
    <cofactor evidence="4 8">
        <name>FMN</name>
        <dbReference type="ChEBI" id="CHEBI:58210"/>
    </cofactor>
    <text evidence="4 8">Can utilize both FAD and FMN.</text>
</comment>
<comment type="biophysicochemical properties">
    <kinetics>
        <KM evidence="5">27.7 uM for glutathione</KM>
        <text evidence="5">kcat is 11.7 h(-1) for the dealkylation of methylcobalamin (MeCbl) (PubMed:19801555). kcat is 0.006 h(-1) for the dealkylation of 5'-deoxyadenosylcobalamin (AdoCbl) (PubMed:19801555).</text>
    </kinetics>
</comment>
<comment type="subunit">
    <text evidence="7 8 9 11 12 14 15">Monomer in the absence of bound substrate (PubMed:21697092, PubMed:22642810). Homodimer; dimerization is triggered by binding to FMN or adenosylcobalamin (PubMed:22642810). Interacts with LMBRD1 and ABCD4; the interaction ensures the transport of cobalamin from the lysosome to the cytoplasm (PubMed:25535791). Forms a multiprotein complex with MMADHC, MTR and MTRR; the interaction with MTR could modulate MMACHC-dependent processing of cobalamin (PubMed:27771510). Heterodimer with MMADHC; the interaction might play a role in the regulation of the balance between AdoCbl and MeCbl synthesis (PubMed:21071249, PubMed:23415655, PubMed:26483544).</text>
</comment>
<comment type="interaction">
    <interactant intactId="EBI-9775184">
        <id>Q9Y4U1</id>
    </interactant>
    <interactant intactId="EBI-2479962">
        <id>Q92526</id>
        <label>CCT6B</label>
    </interactant>
    <organismsDiffer>false</organismsDiffer>
    <experiments>3</experiments>
</comment>
<comment type="interaction">
    <interactant intactId="EBI-9775184">
        <id>Q9Y4U1</id>
    </interactant>
    <interactant intactId="EBI-1045782">
        <id>Q99707</id>
        <label>MTR</label>
    </interactant>
    <organismsDiffer>false</organismsDiffer>
    <experiments>3</experiments>
</comment>
<comment type="subcellular location">
    <subcellularLocation>
        <location evidence="10">Cytoplasm</location>
        <location evidence="10">Cytosol</location>
    </subcellularLocation>
</comment>
<comment type="tissue specificity">
    <text evidence="2">Widely expressed. Expressed at higher level in fetal liver. Also expressed in spleen, lymph node, thymus and bone marrow. Weakly or not expressed in peripheral blood leukocytes.</text>
</comment>
<comment type="disease" evidence="2 4 6 9 13">
    <disease id="DI-00744">
        <name>Methylmalonic aciduria and homocystinuria, cblC type</name>
        <acronym>MAHCC</acronym>
        <description>An autosomal recessive disorder of cobalamin metabolism characterized by decreased levels of the coenzymes adenosylcobalamin (AdoCbl) and methylcobalamin (MeCbl). Affected individuals may have developmental, hematologic, neurologic, metabolic, ophthalmologic, and dermatologic clinical findings. Although considered a disease of infancy or childhood, some individuals develop symptoms in adulthood.</description>
        <dbReference type="MIM" id="277400"/>
    </disease>
    <text>The disease is caused by variants affecting the gene represented in this entry.</text>
</comment>
<comment type="similarity">
    <text evidence="21">Belongs to the MMACHC family.</text>
</comment>
<comment type="sequence caution" evidence="21">
    <conflict type="erroneous initiation">
        <sequence resource="EMBL-CDS" id="AAH06122"/>
    </conflict>
</comment>